<keyword id="KW-0325">Glycoprotein</keyword>
<keyword id="KW-0378">Hydrolase</keyword>
<keyword id="KW-0442">Lipid degradation</keyword>
<keyword id="KW-0443">Lipid metabolism</keyword>
<keyword id="KW-1185">Reference proteome</keyword>
<keyword id="KW-0964">Secreted</keyword>
<keyword id="KW-0732">Signal</keyword>
<evidence type="ECO:0000250" key="1"/>
<evidence type="ECO:0000255" key="2"/>
<evidence type="ECO:0000305" key="3"/>
<comment type="subcellular location">
    <subcellularLocation>
        <location evidence="3">Secreted</location>
    </subcellularLocation>
</comment>
<comment type="similarity">
    <text evidence="3">Belongs to the 'GDSL' lipolytic enzyme family.</text>
</comment>
<reference key="1">
    <citation type="journal article" date="1999" name="Nature">
        <title>Sequence and analysis of chromosome 4 of the plant Arabidopsis thaliana.</title>
        <authorList>
            <person name="Mayer K.F.X."/>
            <person name="Schueller C."/>
            <person name="Wambutt R."/>
            <person name="Murphy G."/>
            <person name="Volckaert G."/>
            <person name="Pohl T."/>
            <person name="Duesterhoeft A."/>
            <person name="Stiekema W."/>
            <person name="Entian K.-D."/>
            <person name="Terryn N."/>
            <person name="Harris B."/>
            <person name="Ansorge W."/>
            <person name="Brandt P."/>
            <person name="Grivell L.A."/>
            <person name="Rieger M."/>
            <person name="Weichselgartner M."/>
            <person name="de Simone V."/>
            <person name="Obermaier B."/>
            <person name="Mache R."/>
            <person name="Mueller M."/>
            <person name="Kreis M."/>
            <person name="Delseny M."/>
            <person name="Puigdomenech P."/>
            <person name="Watson M."/>
            <person name="Schmidtheini T."/>
            <person name="Reichert B."/>
            <person name="Portetelle D."/>
            <person name="Perez-Alonso M."/>
            <person name="Boutry M."/>
            <person name="Bancroft I."/>
            <person name="Vos P."/>
            <person name="Hoheisel J."/>
            <person name="Zimmermann W."/>
            <person name="Wedler H."/>
            <person name="Ridley P."/>
            <person name="Langham S.-A."/>
            <person name="McCullagh B."/>
            <person name="Bilham L."/>
            <person name="Robben J."/>
            <person name="van der Schueren J."/>
            <person name="Grymonprez B."/>
            <person name="Chuang Y.-J."/>
            <person name="Vandenbussche F."/>
            <person name="Braeken M."/>
            <person name="Weltjens I."/>
            <person name="Voet M."/>
            <person name="Bastiaens I."/>
            <person name="Aert R."/>
            <person name="Defoor E."/>
            <person name="Weitzenegger T."/>
            <person name="Bothe G."/>
            <person name="Ramsperger U."/>
            <person name="Hilbert H."/>
            <person name="Braun M."/>
            <person name="Holzer E."/>
            <person name="Brandt A."/>
            <person name="Peters S."/>
            <person name="van Staveren M."/>
            <person name="Dirkse W."/>
            <person name="Mooijman P."/>
            <person name="Klein Lankhorst R."/>
            <person name="Rose M."/>
            <person name="Hauf J."/>
            <person name="Koetter P."/>
            <person name="Berneiser S."/>
            <person name="Hempel S."/>
            <person name="Feldpausch M."/>
            <person name="Lamberth S."/>
            <person name="Van den Daele H."/>
            <person name="De Keyser A."/>
            <person name="Buysshaert C."/>
            <person name="Gielen J."/>
            <person name="Villarroel R."/>
            <person name="De Clercq R."/>
            <person name="van Montagu M."/>
            <person name="Rogers J."/>
            <person name="Cronin A."/>
            <person name="Quail M.A."/>
            <person name="Bray-Allen S."/>
            <person name="Clark L."/>
            <person name="Doggett J."/>
            <person name="Hall S."/>
            <person name="Kay M."/>
            <person name="Lennard N."/>
            <person name="McLay K."/>
            <person name="Mayes R."/>
            <person name="Pettett A."/>
            <person name="Rajandream M.A."/>
            <person name="Lyne M."/>
            <person name="Benes V."/>
            <person name="Rechmann S."/>
            <person name="Borkova D."/>
            <person name="Bloecker H."/>
            <person name="Scharfe M."/>
            <person name="Grimm M."/>
            <person name="Loehnert T.-H."/>
            <person name="Dose S."/>
            <person name="de Haan M."/>
            <person name="Maarse A.C."/>
            <person name="Schaefer M."/>
            <person name="Mueller-Auer S."/>
            <person name="Gabel C."/>
            <person name="Fuchs M."/>
            <person name="Fartmann B."/>
            <person name="Granderath K."/>
            <person name="Dauner D."/>
            <person name="Herzl A."/>
            <person name="Neumann S."/>
            <person name="Argiriou A."/>
            <person name="Vitale D."/>
            <person name="Liguori R."/>
            <person name="Piravandi E."/>
            <person name="Massenet O."/>
            <person name="Quigley F."/>
            <person name="Clabauld G."/>
            <person name="Muendlein A."/>
            <person name="Felber R."/>
            <person name="Schnabl S."/>
            <person name="Hiller R."/>
            <person name="Schmidt W."/>
            <person name="Lecharny A."/>
            <person name="Aubourg S."/>
            <person name="Chefdor F."/>
            <person name="Cooke R."/>
            <person name="Berger C."/>
            <person name="Monfort A."/>
            <person name="Casacuberta E."/>
            <person name="Gibbons T."/>
            <person name="Weber N."/>
            <person name="Vandenbol M."/>
            <person name="Bargues M."/>
            <person name="Terol J."/>
            <person name="Torres A."/>
            <person name="Perez-Perez A."/>
            <person name="Purnelle B."/>
            <person name="Bent E."/>
            <person name="Johnson S."/>
            <person name="Tacon D."/>
            <person name="Jesse T."/>
            <person name="Heijnen L."/>
            <person name="Schwarz S."/>
            <person name="Scholler P."/>
            <person name="Heber S."/>
            <person name="Francs P."/>
            <person name="Bielke C."/>
            <person name="Frishman D."/>
            <person name="Haase D."/>
            <person name="Lemcke K."/>
            <person name="Mewes H.-W."/>
            <person name="Stocker S."/>
            <person name="Zaccaria P."/>
            <person name="Bevan M."/>
            <person name="Wilson R.K."/>
            <person name="de la Bastide M."/>
            <person name="Habermann K."/>
            <person name="Parnell L."/>
            <person name="Dedhia N."/>
            <person name="Gnoj L."/>
            <person name="Schutz K."/>
            <person name="Huang E."/>
            <person name="Spiegel L."/>
            <person name="Sekhon M."/>
            <person name="Murray J."/>
            <person name="Sheet P."/>
            <person name="Cordes M."/>
            <person name="Abu-Threideh J."/>
            <person name="Stoneking T."/>
            <person name="Kalicki J."/>
            <person name="Graves T."/>
            <person name="Harmon G."/>
            <person name="Edwards J."/>
            <person name="Latreille P."/>
            <person name="Courtney L."/>
            <person name="Cloud J."/>
            <person name="Abbott A."/>
            <person name="Scott K."/>
            <person name="Johnson D."/>
            <person name="Minx P."/>
            <person name="Bentley D."/>
            <person name="Fulton B."/>
            <person name="Miller N."/>
            <person name="Greco T."/>
            <person name="Kemp K."/>
            <person name="Kramer J."/>
            <person name="Fulton L."/>
            <person name="Mardis E."/>
            <person name="Dante M."/>
            <person name="Pepin K."/>
            <person name="Hillier L.W."/>
            <person name="Nelson J."/>
            <person name="Spieth J."/>
            <person name="Ryan E."/>
            <person name="Andrews S."/>
            <person name="Geisel C."/>
            <person name="Layman D."/>
            <person name="Du H."/>
            <person name="Ali J."/>
            <person name="Berghoff A."/>
            <person name="Jones K."/>
            <person name="Drone K."/>
            <person name="Cotton M."/>
            <person name="Joshu C."/>
            <person name="Antonoiu B."/>
            <person name="Zidanic M."/>
            <person name="Strong C."/>
            <person name="Sun H."/>
            <person name="Lamar B."/>
            <person name="Yordan C."/>
            <person name="Ma P."/>
            <person name="Zhong J."/>
            <person name="Preston R."/>
            <person name="Vil D."/>
            <person name="Shekher M."/>
            <person name="Matero A."/>
            <person name="Shah R."/>
            <person name="Swaby I.K."/>
            <person name="O'Shaughnessy A."/>
            <person name="Rodriguez M."/>
            <person name="Hoffman J."/>
            <person name="Till S."/>
            <person name="Granat S."/>
            <person name="Shohdy N."/>
            <person name="Hasegawa A."/>
            <person name="Hameed A."/>
            <person name="Lodhi M."/>
            <person name="Johnson A."/>
            <person name="Chen E."/>
            <person name="Marra M.A."/>
            <person name="Martienssen R."/>
            <person name="McCombie W.R."/>
        </authorList>
    </citation>
    <scope>NUCLEOTIDE SEQUENCE [LARGE SCALE GENOMIC DNA]</scope>
    <source>
        <strain>cv. Columbia</strain>
    </source>
</reference>
<reference key="2">
    <citation type="journal article" date="2017" name="Plant J.">
        <title>Araport11: a complete reannotation of the Arabidopsis thaliana reference genome.</title>
        <authorList>
            <person name="Cheng C.Y."/>
            <person name="Krishnakumar V."/>
            <person name="Chan A.P."/>
            <person name="Thibaud-Nissen F."/>
            <person name="Schobel S."/>
            <person name="Town C.D."/>
        </authorList>
    </citation>
    <scope>GENOME REANNOTATION</scope>
    <source>
        <strain>cv. Columbia</strain>
    </source>
</reference>
<reference key="3">
    <citation type="journal article" date="2003" name="Science">
        <title>Empirical analysis of transcriptional activity in the Arabidopsis genome.</title>
        <authorList>
            <person name="Yamada K."/>
            <person name="Lim J."/>
            <person name="Dale J.M."/>
            <person name="Chen H."/>
            <person name="Shinn P."/>
            <person name="Palm C.J."/>
            <person name="Southwick A.M."/>
            <person name="Wu H.C."/>
            <person name="Kim C.J."/>
            <person name="Nguyen M."/>
            <person name="Pham P.K."/>
            <person name="Cheuk R.F."/>
            <person name="Karlin-Newmann G."/>
            <person name="Liu S.X."/>
            <person name="Lam B."/>
            <person name="Sakano H."/>
            <person name="Wu T."/>
            <person name="Yu G."/>
            <person name="Miranda M."/>
            <person name="Quach H.L."/>
            <person name="Tripp M."/>
            <person name="Chang C.H."/>
            <person name="Lee J.M."/>
            <person name="Toriumi M.J."/>
            <person name="Chan M.M."/>
            <person name="Tang C.C."/>
            <person name="Onodera C.S."/>
            <person name="Deng J.M."/>
            <person name="Akiyama K."/>
            <person name="Ansari Y."/>
            <person name="Arakawa T."/>
            <person name="Banh J."/>
            <person name="Banno F."/>
            <person name="Bowser L."/>
            <person name="Brooks S.Y."/>
            <person name="Carninci P."/>
            <person name="Chao Q."/>
            <person name="Choy N."/>
            <person name="Enju A."/>
            <person name="Goldsmith A.D."/>
            <person name="Gurjal M."/>
            <person name="Hansen N.F."/>
            <person name="Hayashizaki Y."/>
            <person name="Johnson-Hopson C."/>
            <person name="Hsuan V.W."/>
            <person name="Iida K."/>
            <person name="Karnes M."/>
            <person name="Khan S."/>
            <person name="Koesema E."/>
            <person name="Ishida J."/>
            <person name="Jiang P.X."/>
            <person name="Jones T."/>
            <person name="Kawai J."/>
            <person name="Kamiya A."/>
            <person name="Meyers C."/>
            <person name="Nakajima M."/>
            <person name="Narusaka M."/>
            <person name="Seki M."/>
            <person name="Sakurai T."/>
            <person name="Satou M."/>
            <person name="Tamse R."/>
            <person name="Vaysberg M."/>
            <person name="Wallender E.K."/>
            <person name="Wong C."/>
            <person name="Yamamura Y."/>
            <person name="Yuan S."/>
            <person name="Shinozaki K."/>
            <person name="Davis R.W."/>
            <person name="Theologis A."/>
            <person name="Ecker J.R."/>
        </authorList>
    </citation>
    <scope>NUCLEOTIDE SEQUENCE [LARGE SCALE MRNA]</scope>
    <source>
        <strain>cv. Columbia</strain>
    </source>
</reference>
<reference key="4">
    <citation type="submission" date="2002-03" db="EMBL/GenBank/DDBJ databases">
        <title>Full-length cDNA from Arabidopsis thaliana.</title>
        <authorList>
            <person name="Brover V.V."/>
            <person name="Troukhan M.E."/>
            <person name="Alexandrov N.A."/>
            <person name="Lu Y.-P."/>
            <person name="Flavell R.B."/>
            <person name="Feldmann K.A."/>
        </authorList>
    </citation>
    <scope>NUCLEOTIDE SEQUENCE [LARGE SCALE MRNA]</scope>
</reference>
<reference key="5">
    <citation type="journal article" date="2004" name="Prog. Lipid Res.">
        <title>GDSL family of serine esterases/lipases.</title>
        <authorList>
            <person name="Akoh C.C."/>
            <person name="Lee G.-C."/>
            <person name="Liaw Y.-C."/>
            <person name="Huang T.-H."/>
            <person name="Shaw J.-F."/>
        </authorList>
    </citation>
    <scope>REVIEW</scope>
</reference>
<reference key="6">
    <citation type="journal article" date="2008" name="Pak. J. Biol. Sci.">
        <title>Sequence analysis of GDSL lipase gene family in Arabidopsis thaliana.</title>
        <authorList>
            <person name="Ling H."/>
        </authorList>
    </citation>
    <scope>GENE FAMILY</scope>
</reference>
<accession>Q9SVU5</accession>
<proteinExistence type="evidence at transcript level"/>
<gene>
    <name type="ordered locus">At4g28780</name>
    <name type="ORF">F16A16.110</name>
</gene>
<protein>
    <recommendedName>
        <fullName>GDSL esterase/lipase At4g28780</fullName>
        <ecNumber>3.1.1.-</ecNumber>
    </recommendedName>
    <alternativeName>
        <fullName>Extracellular lipase At4g28780</fullName>
    </alternativeName>
</protein>
<feature type="signal peptide" evidence="2">
    <location>
        <begin position="1"/>
        <end position="28"/>
    </location>
</feature>
<feature type="chain" id="PRO_0000367407" description="GDSL esterase/lipase At4g28780">
    <location>
        <begin position="29"/>
        <end position="367"/>
    </location>
</feature>
<feature type="active site" description="Nucleophile" evidence="1">
    <location>
        <position position="38"/>
    </location>
</feature>
<feature type="active site" evidence="1">
    <location>
        <position position="328"/>
    </location>
</feature>
<feature type="active site" evidence="1">
    <location>
        <position position="331"/>
    </location>
</feature>
<feature type="glycosylation site" description="N-linked (GlcNAc...) asparagine" evidence="2">
    <location>
        <position position="119"/>
    </location>
</feature>
<feature type="glycosylation site" description="N-linked (GlcNAc...) asparagine" evidence="2">
    <location>
        <position position="356"/>
    </location>
</feature>
<organism>
    <name type="scientific">Arabidopsis thaliana</name>
    <name type="common">Mouse-ear cress</name>
    <dbReference type="NCBI Taxonomy" id="3702"/>
    <lineage>
        <taxon>Eukaryota</taxon>
        <taxon>Viridiplantae</taxon>
        <taxon>Streptophyta</taxon>
        <taxon>Embryophyta</taxon>
        <taxon>Tracheophyta</taxon>
        <taxon>Spermatophyta</taxon>
        <taxon>Magnoliopsida</taxon>
        <taxon>eudicotyledons</taxon>
        <taxon>Gunneridae</taxon>
        <taxon>Pentapetalae</taxon>
        <taxon>rosids</taxon>
        <taxon>malvids</taxon>
        <taxon>Brassicales</taxon>
        <taxon>Brassicaceae</taxon>
        <taxon>Camelineae</taxon>
        <taxon>Arabidopsis</taxon>
    </lineage>
</organism>
<dbReference type="EC" id="3.1.1.-"/>
<dbReference type="EMBL" id="AL035353">
    <property type="protein sequence ID" value="CAA22974.1"/>
    <property type="molecule type" value="Genomic_DNA"/>
</dbReference>
<dbReference type="EMBL" id="AL161573">
    <property type="protein sequence ID" value="CAB81466.1"/>
    <property type="molecule type" value="Genomic_DNA"/>
</dbReference>
<dbReference type="EMBL" id="CP002687">
    <property type="protein sequence ID" value="AEE85543.1"/>
    <property type="molecule type" value="Genomic_DNA"/>
</dbReference>
<dbReference type="EMBL" id="BT002993">
    <property type="protein sequence ID" value="AAO22802.1"/>
    <property type="molecule type" value="mRNA"/>
</dbReference>
<dbReference type="EMBL" id="BT004465">
    <property type="protein sequence ID" value="AAO42459.1"/>
    <property type="molecule type" value="mRNA"/>
</dbReference>
<dbReference type="EMBL" id="AY087166">
    <property type="protein sequence ID" value="AAM64722.1"/>
    <property type="molecule type" value="mRNA"/>
</dbReference>
<dbReference type="PIR" id="T04521">
    <property type="entry name" value="T04521"/>
</dbReference>
<dbReference type="RefSeq" id="NP_194607.1">
    <property type="nucleotide sequence ID" value="NM_119022.3"/>
</dbReference>
<dbReference type="SMR" id="Q9SVU5"/>
<dbReference type="BioGRID" id="14286">
    <property type="interactions" value="3"/>
</dbReference>
<dbReference type="FunCoup" id="Q9SVU5">
    <property type="interactions" value="93"/>
</dbReference>
<dbReference type="IntAct" id="Q9SVU5">
    <property type="interactions" value="2"/>
</dbReference>
<dbReference type="STRING" id="3702.Q9SVU5"/>
<dbReference type="GlyGen" id="Q9SVU5">
    <property type="glycosylation" value="2 sites"/>
</dbReference>
<dbReference type="PaxDb" id="3702-AT4G28780.1"/>
<dbReference type="ProteomicsDB" id="247104"/>
<dbReference type="EnsemblPlants" id="AT4G28780.1">
    <property type="protein sequence ID" value="AT4G28780.1"/>
    <property type="gene ID" value="AT4G28780"/>
</dbReference>
<dbReference type="GeneID" id="828999"/>
<dbReference type="Gramene" id="AT4G28780.1">
    <property type="protein sequence ID" value="AT4G28780.1"/>
    <property type="gene ID" value="AT4G28780"/>
</dbReference>
<dbReference type="KEGG" id="ath:AT4G28780"/>
<dbReference type="Araport" id="AT4G28780"/>
<dbReference type="TAIR" id="AT4G28780"/>
<dbReference type="eggNOG" id="ENOG502SK71">
    <property type="taxonomic scope" value="Eukaryota"/>
</dbReference>
<dbReference type="HOGENOM" id="CLU_015101_0_0_1"/>
<dbReference type="InParanoid" id="Q9SVU5"/>
<dbReference type="OMA" id="YNGIGIC"/>
<dbReference type="OrthoDB" id="1600564at2759"/>
<dbReference type="PhylomeDB" id="Q9SVU5"/>
<dbReference type="BioCyc" id="ARA:AT4G28780-MONOMER"/>
<dbReference type="PRO" id="PR:Q9SVU5"/>
<dbReference type="Proteomes" id="UP000006548">
    <property type="component" value="Chromosome 4"/>
</dbReference>
<dbReference type="ExpressionAtlas" id="Q9SVU5">
    <property type="expression patterns" value="baseline and differential"/>
</dbReference>
<dbReference type="GO" id="GO:0005576">
    <property type="term" value="C:extracellular region"/>
    <property type="evidence" value="ECO:0007669"/>
    <property type="project" value="UniProtKB-SubCell"/>
</dbReference>
<dbReference type="GO" id="GO:0016788">
    <property type="term" value="F:hydrolase activity, acting on ester bonds"/>
    <property type="evidence" value="ECO:0007669"/>
    <property type="project" value="InterPro"/>
</dbReference>
<dbReference type="GO" id="GO:0016042">
    <property type="term" value="P:lipid catabolic process"/>
    <property type="evidence" value="ECO:0007669"/>
    <property type="project" value="UniProtKB-KW"/>
</dbReference>
<dbReference type="CDD" id="cd01837">
    <property type="entry name" value="SGNH_plant_lipase_like"/>
    <property type="match status" value="1"/>
</dbReference>
<dbReference type="Gene3D" id="3.40.50.1110">
    <property type="entry name" value="SGNH hydrolase"/>
    <property type="match status" value="1"/>
</dbReference>
<dbReference type="InterPro" id="IPR001087">
    <property type="entry name" value="GDSL"/>
</dbReference>
<dbReference type="InterPro" id="IPR051058">
    <property type="entry name" value="GDSL_Est/Lipase"/>
</dbReference>
<dbReference type="InterPro" id="IPR036514">
    <property type="entry name" value="SGNH_hydro_sf"/>
</dbReference>
<dbReference type="InterPro" id="IPR035669">
    <property type="entry name" value="SGNH_plant_lipase-like"/>
</dbReference>
<dbReference type="PANTHER" id="PTHR45648:SF157">
    <property type="entry name" value="GDSL ESTERASE_LIPASE"/>
    <property type="match status" value="1"/>
</dbReference>
<dbReference type="PANTHER" id="PTHR45648">
    <property type="entry name" value="GDSL LIPASE/ACYLHYDROLASE FAMILY PROTEIN (AFU_ORTHOLOGUE AFUA_4G14700)"/>
    <property type="match status" value="1"/>
</dbReference>
<dbReference type="Pfam" id="PF00657">
    <property type="entry name" value="Lipase_GDSL"/>
    <property type="match status" value="1"/>
</dbReference>
<dbReference type="SUPFAM" id="SSF52266">
    <property type="entry name" value="SGNH hydrolase"/>
    <property type="match status" value="1"/>
</dbReference>
<name>GDL67_ARATH</name>
<sequence length="367" mass="39897">MSTFLLTWIIMTVALSVTLFLMPQQTNAARAFFVFGDSLVDSGNNNYLVTTARADSPPYGIDYPTGRPTGRFSNGLNLPDIISEQIGSEPTLPILSPELTGEKLLIGANFASAGIGILNDTGVQFLNILRIGRQFELFQEYQERVSEIIGSDKTQQLVNGALVLMTLGGNDFVNNYFFPISTRRRQSSLGEFSQLLISEYKKILTSLYELGARRVMVTGTGPLGCVPAELASSGSVNGECAPEAQQAAAIFNPLLVQMLQGLNREIGSDVFIGANAFNTNADFINNPQRFGFVTSKVACCGQGAYNGQGVCTPLSTLCSDRNAYAFWDPFHPTEKATRLIVQQIMTGSVEYMNPMNLSTIMALDSRI</sequence>